<comment type="function">
    <text evidence="1">Catalyzes the 2'-O-methylation at nucleotide C2498 in 23S rRNA.</text>
</comment>
<comment type="catalytic activity">
    <reaction evidence="1">
        <text>cytidine(2498) in 23S rRNA + S-adenosyl-L-methionine = 2'-O-methylcytidine(2498) in 23S rRNA + S-adenosyl-L-homocysteine + H(+)</text>
        <dbReference type="Rhea" id="RHEA:42788"/>
        <dbReference type="Rhea" id="RHEA-COMP:10244"/>
        <dbReference type="Rhea" id="RHEA-COMP:10245"/>
        <dbReference type="ChEBI" id="CHEBI:15378"/>
        <dbReference type="ChEBI" id="CHEBI:57856"/>
        <dbReference type="ChEBI" id="CHEBI:59789"/>
        <dbReference type="ChEBI" id="CHEBI:74495"/>
        <dbReference type="ChEBI" id="CHEBI:82748"/>
        <dbReference type="EC" id="2.1.1.186"/>
    </reaction>
</comment>
<comment type="subunit">
    <text evidence="1">Monomer.</text>
</comment>
<comment type="subcellular location">
    <subcellularLocation>
        <location evidence="1">Cytoplasm</location>
    </subcellularLocation>
</comment>
<comment type="similarity">
    <text evidence="1">Belongs to the class I-like SAM-binding methyltransferase superfamily. RNA methyltransferase RlmE family. RlmM subfamily.</text>
</comment>
<name>RLMM_ACTP7</name>
<organism>
    <name type="scientific">Actinobacillus pleuropneumoniae serotype 7 (strain AP76)</name>
    <dbReference type="NCBI Taxonomy" id="537457"/>
    <lineage>
        <taxon>Bacteria</taxon>
        <taxon>Pseudomonadati</taxon>
        <taxon>Pseudomonadota</taxon>
        <taxon>Gammaproteobacteria</taxon>
        <taxon>Pasteurellales</taxon>
        <taxon>Pasteurellaceae</taxon>
        <taxon>Actinobacillus</taxon>
    </lineage>
</organism>
<feature type="chain" id="PRO_1000201508" description="Ribosomal RNA large subunit methyltransferase M">
    <location>
        <begin position="1"/>
        <end position="361"/>
    </location>
</feature>
<feature type="active site" description="Proton acceptor" evidence="1">
    <location>
        <position position="309"/>
    </location>
</feature>
<feature type="binding site" evidence="1">
    <location>
        <position position="190"/>
    </location>
    <ligand>
        <name>S-adenosyl-L-methionine</name>
        <dbReference type="ChEBI" id="CHEBI:59789"/>
    </ligand>
</feature>
<feature type="binding site" evidence="1">
    <location>
        <begin position="223"/>
        <end position="226"/>
    </location>
    <ligand>
        <name>S-adenosyl-L-methionine</name>
        <dbReference type="ChEBI" id="CHEBI:59789"/>
    </ligand>
</feature>
<feature type="binding site" evidence="1">
    <location>
        <position position="242"/>
    </location>
    <ligand>
        <name>S-adenosyl-L-methionine</name>
        <dbReference type="ChEBI" id="CHEBI:59789"/>
    </ligand>
</feature>
<feature type="binding site" evidence="1">
    <location>
        <position position="262"/>
    </location>
    <ligand>
        <name>S-adenosyl-L-methionine</name>
        <dbReference type="ChEBI" id="CHEBI:59789"/>
    </ligand>
</feature>
<feature type="binding site" evidence="1">
    <location>
        <position position="280"/>
    </location>
    <ligand>
        <name>S-adenosyl-L-methionine</name>
        <dbReference type="ChEBI" id="CHEBI:59789"/>
    </ligand>
</feature>
<gene>
    <name evidence="1" type="primary">rlmM</name>
    <name type="ordered locus">APP7_0727</name>
</gene>
<evidence type="ECO:0000255" key="1">
    <source>
        <dbReference type="HAMAP-Rule" id="MF_01551"/>
    </source>
</evidence>
<accession>B3H1B0</accession>
<reference key="1">
    <citation type="submission" date="2008-06" db="EMBL/GenBank/DDBJ databases">
        <title>Genome and proteome analysis of A. pleuropneumoniae serotype 7.</title>
        <authorList>
            <person name="Linke B."/>
            <person name="Buettner F."/>
            <person name="Martinez-Arias R."/>
            <person name="Goesmann A."/>
            <person name="Baltes N."/>
            <person name="Tegetmeyer H."/>
            <person name="Singh M."/>
            <person name="Gerlach G.F."/>
        </authorList>
    </citation>
    <scope>NUCLEOTIDE SEQUENCE [LARGE SCALE GENOMIC DNA]</scope>
    <source>
        <strain>AP76</strain>
    </source>
</reference>
<protein>
    <recommendedName>
        <fullName evidence="1">Ribosomal RNA large subunit methyltransferase M</fullName>
        <ecNumber evidence="1">2.1.1.186</ecNumber>
    </recommendedName>
    <alternativeName>
        <fullName evidence="1">23S rRNA (cytidine2498-2'-O)-methyltransferase</fullName>
    </alternativeName>
    <alternativeName>
        <fullName evidence="1">23S rRNA 2'-O-ribose methyltransferase RlmM</fullName>
    </alternativeName>
</protein>
<sequence length="361" mass="41493">MNKLALYCRAGFEKETAGEITDKAAQLGVFGFVNLKENSGYIIFECYQAGDADRLARELKFEQLIFARQMIVVGDMLQDLPVEDRISPIVAQYQALNPRHSSDIFVETPDTNEAKELLTFCRKFTVPLRNSLKKQGWLTKSERAKGSIGLHILFVRPGCCYVGYAYNDNKSPFFMGIPRLKFPAEAPSRSTLKLEEAILTFIPEAEEKKRFTDEMTGVDLGACPGGWTYQLVKRGVFVYAVDHGKMAASLHETGRIEHCPEDGFKFQPPKRKTIDWLVCDMVEQPMRISKLIGKWLINGWCRETIFNLKLPMKKRYQEVQLCLAYLEEELEKQGFWFKIQAKHLYHDREEITVHIAVMGKR</sequence>
<keyword id="KW-0963">Cytoplasm</keyword>
<keyword id="KW-0489">Methyltransferase</keyword>
<keyword id="KW-0698">rRNA processing</keyword>
<keyword id="KW-0949">S-adenosyl-L-methionine</keyword>
<keyword id="KW-0808">Transferase</keyword>
<dbReference type="EC" id="2.1.1.186" evidence="1"/>
<dbReference type="EMBL" id="CP001091">
    <property type="protein sequence ID" value="ACE61379.1"/>
    <property type="molecule type" value="Genomic_DNA"/>
</dbReference>
<dbReference type="RefSeq" id="WP_005607570.1">
    <property type="nucleotide sequence ID" value="NC_010939.1"/>
</dbReference>
<dbReference type="SMR" id="B3H1B0"/>
<dbReference type="KEGG" id="apa:APP7_0727"/>
<dbReference type="HOGENOM" id="CLU_043780_0_0_6"/>
<dbReference type="Proteomes" id="UP000001226">
    <property type="component" value="Chromosome"/>
</dbReference>
<dbReference type="GO" id="GO:0005737">
    <property type="term" value="C:cytoplasm"/>
    <property type="evidence" value="ECO:0007669"/>
    <property type="project" value="UniProtKB-SubCell"/>
</dbReference>
<dbReference type="GO" id="GO:0008757">
    <property type="term" value="F:S-adenosylmethionine-dependent methyltransferase activity"/>
    <property type="evidence" value="ECO:0007669"/>
    <property type="project" value="UniProtKB-UniRule"/>
</dbReference>
<dbReference type="GO" id="GO:0032259">
    <property type="term" value="P:methylation"/>
    <property type="evidence" value="ECO:0007669"/>
    <property type="project" value="UniProtKB-KW"/>
</dbReference>
<dbReference type="GO" id="GO:0006364">
    <property type="term" value="P:rRNA processing"/>
    <property type="evidence" value="ECO:0007669"/>
    <property type="project" value="UniProtKB-UniRule"/>
</dbReference>
<dbReference type="Gene3D" id="3.30.2300.20">
    <property type="match status" value="1"/>
</dbReference>
<dbReference type="Gene3D" id="3.30.70.2810">
    <property type="match status" value="1"/>
</dbReference>
<dbReference type="Gene3D" id="3.40.50.150">
    <property type="entry name" value="Vaccinia Virus protein VP39"/>
    <property type="match status" value="1"/>
</dbReference>
<dbReference type="HAMAP" id="MF_01551">
    <property type="entry name" value="23SrRNA_methyltr_M"/>
    <property type="match status" value="1"/>
</dbReference>
<dbReference type="InterPro" id="IPR040739">
    <property type="entry name" value="RlmM_FDX"/>
</dbReference>
<dbReference type="InterPro" id="IPR048646">
    <property type="entry name" value="RlmM_THUMP-like"/>
</dbReference>
<dbReference type="InterPro" id="IPR002877">
    <property type="entry name" value="RNA_MeTrfase_FtsJ_dom"/>
</dbReference>
<dbReference type="InterPro" id="IPR011224">
    <property type="entry name" value="rRNA_MeTrfase_M"/>
</dbReference>
<dbReference type="InterPro" id="IPR029063">
    <property type="entry name" value="SAM-dependent_MTases_sf"/>
</dbReference>
<dbReference type="NCBIfam" id="NF008734">
    <property type="entry name" value="PRK11760.1"/>
    <property type="match status" value="1"/>
</dbReference>
<dbReference type="PANTHER" id="PTHR37524">
    <property type="entry name" value="RIBOSOMAL RNA LARGE SUBUNIT METHYLTRANSFERASE M"/>
    <property type="match status" value="1"/>
</dbReference>
<dbReference type="PANTHER" id="PTHR37524:SF2">
    <property type="entry name" value="RIBOSOMAL RNA METHYLTRANSFERASE FTSJ DOMAIN-CONTAINING PROTEIN"/>
    <property type="match status" value="1"/>
</dbReference>
<dbReference type="Pfam" id="PF01728">
    <property type="entry name" value="FtsJ"/>
    <property type="match status" value="1"/>
</dbReference>
<dbReference type="Pfam" id="PF18125">
    <property type="entry name" value="RlmM_FDX"/>
    <property type="match status" value="1"/>
</dbReference>
<dbReference type="Pfam" id="PF21239">
    <property type="entry name" value="RLMM_N"/>
    <property type="match status" value="1"/>
</dbReference>
<dbReference type="PIRSF" id="PIRSF028774">
    <property type="entry name" value="UCP028774"/>
    <property type="match status" value="1"/>
</dbReference>
<dbReference type="SUPFAM" id="SSF53335">
    <property type="entry name" value="S-adenosyl-L-methionine-dependent methyltransferases"/>
    <property type="match status" value="1"/>
</dbReference>
<proteinExistence type="inferred from homology"/>